<keyword id="KW-0021">Allosteric enzyme</keyword>
<keyword id="KW-0067">ATP-binding</keyword>
<keyword id="KW-0215">Deoxyribonucleotide synthesis</keyword>
<keyword id="KW-1015">Disulfide bond</keyword>
<keyword id="KW-0547">Nucleotide-binding</keyword>
<keyword id="KW-0560">Oxidoreductase</keyword>
<keyword id="KW-1185">Reference proteome</keyword>
<reference key="1">
    <citation type="journal article" date="1996" name="DNA Res.">
        <title>Sequence analysis of the genome of the unicellular cyanobacterium Synechocystis sp. strain PCC6803. II. Sequence determination of the entire genome and assignment of potential protein-coding regions.</title>
        <authorList>
            <person name="Kaneko T."/>
            <person name="Sato S."/>
            <person name="Kotani H."/>
            <person name="Tanaka A."/>
            <person name="Asamizu E."/>
            <person name="Nakamura Y."/>
            <person name="Miyajima N."/>
            <person name="Hirosawa M."/>
            <person name="Sugiura M."/>
            <person name="Sasamoto S."/>
            <person name="Kimura T."/>
            <person name="Hosouchi T."/>
            <person name="Matsuno A."/>
            <person name="Muraki A."/>
            <person name="Nakazaki N."/>
            <person name="Naruo K."/>
            <person name="Okumura S."/>
            <person name="Shimpo S."/>
            <person name="Takeuchi C."/>
            <person name="Wada T."/>
            <person name="Watanabe A."/>
            <person name="Yamada M."/>
            <person name="Yasuda M."/>
            <person name="Tabata S."/>
        </authorList>
    </citation>
    <scope>NUCLEOTIDE SEQUENCE [LARGE SCALE GENOMIC DNA]</scope>
    <source>
        <strain>ATCC 27184 / PCC 6803 / Kazusa</strain>
    </source>
</reference>
<accession>P74240</accession>
<proteinExistence type="inferred from homology"/>
<feature type="chain" id="PRO_0000187222" description="Ribonucleoside-diphosphate reductase subunit alpha">
    <location>
        <begin position="1"/>
        <end position="767"/>
    </location>
</feature>
<feature type="domain" description="ATP-cone" evidence="2">
    <location>
        <begin position="31"/>
        <end position="120"/>
    </location>
</feature>
<feature type="region of interest" description="Disordered" evidence="3">
    <location>
        <begin position="1"/>
        <end position="30"/>
    </location>
</feature>
<feature type="compositionally biased region" description="Polar residues" evidence="3">
    <location>
        <begin position="9"/>
        <end position="26"/>
    </location>
</feature>
<feature type="active site" description="Proton acceptor" evidence="1">
    <location>
        <position position="460"/>
    </location>
</feature>
<feature type="active site" description="Cysteine radical intermediate" evidence="1">
    <location>
        <position position="462"/>
    </location>
</feature>
<feature type="active site" description="Proton acceptor" evidence="1">
    <location>
        <position position="464"/>
    </location>
</feature>
<feature type="binding site" evidence="1">
    <location>
        <position position="228"/>
    </location>
    <ligand>
        <name>substrate</name>
    </ligand>
</feature>
<feature type="binding site" evidence="1">
    <location>
        <begin position="243"/>
        <end position="244"/>
    </location>
    <ligand>
        <name>substrate</name>
    </ligand>
</feature>
<feature type="binding site" evidence="1">
    <location>
        <position position="272"/>
    </location>
    <ligand>
        <name>substrate</name>
    </ligand>
</feature>
<feature type="binding site" evidence="1">
    <location>
        <begin position="460"/>
        <end position="464"/>
    </location>
    <ligand>
        <name>substrate</name>
    </ligand>
</feature>
<feature type="binding site" evidence="1">
    <location>
        <begin position="631"/>
        <end position="635"/>
    </location>
    <ligand>
        <name>substrate</name>
    </ligand>
</feature>
<feature type="site" description="Important for hydrogen atom transfer" evidence="1">
    <location>
        <position position="244"/>
    </location>
</feature>
<feature type="site" description="Allosteric effector binding" evidence="1">
    <location>
        <position position="251"/>
    </location>
</feature>
<feature type="site" description="Allosteric effector binding" evidence="1">
    <location>
        <position position="281"/>
    </location>
</feature>
<feature type="site" description="Important for hydrogen atom transfer" evidence="1">
    <location>
        <position position="478"/>
    </location>
</feature>
<feature type="site" description="Important for electron transfer" evidence="1">
    <location>
        <position position="745"/>
    </location>
</feature>
<feature type="site" description="Important for electron transfer" evidence="1">
    <location>
        <position position="746"/>
    </location>
</feature>
<feature type="site" description="Interacts with thioredoxin/glutaredoxin" evidence="1">
    <location>
        <position position="762"/>
    </location>
</feature>
<feature type="site" description="Interacts with thioredoxin/glutaredoxin" evidence="1">
    <location>
        <position position="765"/>
    </location>
</feature>
<feature type="disulfide bond" description="Redox-active" evidence="1">
    <location>
        <begin position="244"/>
        <end position="478"/>
    </location>
</feature>
<protein>
    <recommendedName>
        <fullName>Ribonucleoside-diphosphate reductase subunit alpha</fullName>
        <ecNumber>1.17.4.1</ecNumber>
    </recommendedName>
    <alternativeName>
        <fullName>Ribonucleotide reductase</fullName>
    </alternativeName>
</protein>
<gene>
    <name type="primary">nrdA</name>
    <name type="ordered locus">slr1164</name>
</gene>
<dbReference type="EC" id="1.17.4.1"/>
<dbReference type="EMBL" id="BA000022">
    <property type="protein sequence ID" value="BAA18334.1"/>
    <property type="molecule type" value="Genomic_DNA"/>
</dbReference>
<dbReference type="PIR" id="S75875">
    <property type="entry name" value="S75875"/>
</dbReference>
<dbReference type="SMR" id="P74240"/>
<dbReference type="FunCoup" id="P74240">
    <property type="interactions" value="350"/>
</dbReference>
<dbReference type="IntAct" id="P74240">
    <property type="interactions" value="3"/>
</dbReference>
<dbReference type="STRING" id="1148.gene:10499210"/>
<dbReference type="PaxDb" id="1148-1653420"/>
<dbReference type="EnsemblBacteria" id="BAA18334">
    <property type="protein sequence ID" value="BAA18334"/>
    <property type="gene ID" value="BAA18334"/>
</dbReference>
<dbReference type="KEGG" id="syn:slr1164"/>
<dbReference type="eggNOG" id="COG0209">
    <property type="taxonomic scope" value="Bacteria"/>
</dbReference>
<dbReference type="InParanoid" id="P74240"/>
<dbReference type="PhylomeDB" id="P74240"/>
<dbReference type="Proteomes" id="UP000001425">
    <property type="component" value="Chromosome"/>
</dbReference>
<dbReference type="GO" id="GO:0005971">
    <property type="term" value="C:ribonucleoside-diphosphate reductase complex"/>
    <property type="evidence" value="ECO:0000318"/>
    <property type="project" value="GO_Central"/>
</dbReference>
<dbReference type="GO" id="GO:0005524">
    <property type="term" value="F:ATP binding"/>
    <property type="evidence" value="ECO:0000318"/>
    <property type="project" value="GO_Central"/>
</dbReference>
<dbReference type="GO" id="GO:0004748">
    <property type="term" value="F:ribonucleoside-diphosphate reductase activity, thioredoxin disulfide as acceptor"/>
    <property type="evidence" value="ECO:0000318"/>
    <property type="project" value="GO_Central"/>
</dbReference>
<dbReference type="GO" id="GO:0009263">
    <property type="term" value="P:deoxyribonucleotide biosynthetic process"/>
    <property type="evidence" value="ECO:0000318"/>
    <property type="project" value="GO_Central"/>
</dbReference>
<dbReference type="CDD" id="cd01679">
    <property type="entry name" value="RNR_I"/>
    <property type="match status" value="1"/>
</dbReference>
<dbReference type="Gene3D" id="3.20.70.20">
    <property type="match status" value="1"/>
</dbReference>
<dbReference type="InterPro" id="IPR005144">
    <property type="entry name" value="ATP-cone_dom"/>
</dbReference>
<dbReference type="InterPro" id="IPR013346">
    <property type="entry name" value="NrdE_NrdA_C"/>
</dbReference>
<dbReference type="InterPro" id="IPR000788">
    <property type="entry name" value="RNR_lg_C"/>
</dbReference>
<dbReference type="InterPro" id="IPR013509">
    <property type="entry name" value="RNR_lsu_N"/>
</dbReference>
<dbReference type="InterPro" id="IPR008926">
    <property type="entry name" value="RNR_R1-su_N"/>
</dbReference>
<dbReference type="InterPro" id="IPR039718">
    <property type="entry name" value="Rrm1"/>
</dbReference>
<dbReference type="NCBIfam" id="TIGR02506">
    <property type="entry name" value="NrdE_NrdA"/>
    <property type="match status" value="1"/>
</dbReference>
<dbReference type="PANTHER" id="PTHR11573">
    <property type="entry name" value="RIBONUCLEOSIDE-DIPHOSPHATE REDUCTASE LARGE CHAIN"/>
    <property type="match status" value="1"/>
</dbReference>
<dbReference type="PANTHER" id="PTHR11573:SF6">
    <property type="entry name" value="RIBONUCLEOSIDE-DIPHOSPHATE REDUCTASE LARGE SUBUNIT"/>
    <property type="match status" value="1"/>
</dbReference>
<dbReference type="Pfam" id="PF03477">
    <property type="entry name" value="ATP-cone"/>
    <property type="match status" value="1"/>
</dbReference>
<dbReference type="Pfam" id="PF02867">
    <property type="entry name" value="Ribonuc_red_lgC"/>
    <property type="match status" value="1"/>
</dbReference>
<dbReference type="Pfam" id="PF00317">
    <property type="entry name" value="Ribonuc_red_lgN"/>
    <property type="match status" value="1"/>
</dbReference>
<dbReference type="PRINTS" id="PR01183">
    <property type="entry name" value="RIBORDTASEM1"/>
</dbReference>
<dbReference type="SUPFAM" id="SSF51998">
    <property type="entry name" value="PFL-like glycyl radical enzymes"/>
    <property type="match status" value="1"/>
</dbReference>
<dbReference type="SUPFAM" id="SSF48168">
    <property type="entry name" value="R1 subunit of ribonucleotide reductase, N-terminal domain"/>
    <property type="match status" value="1"/>
</dbReference>
<dbReference type="PROSITE" id="PS51161">
    <property type="entry name" value="ATP_CONE"/>
    <property type="match status" value="1"/>
</dbReference>
<dbReference type="PROSITE" id="PS00089">
    <property type="entry name" value="RIBORED_LARGE"/>
    <property type="match status" value="1"/>
</dbReference>
<name>RIR1_SYNY3</name>
<comment type="function">
    <text evidence="1">Provides the precursors necessary for DNA synthesis. Catalyzes the biosynthesis of deoxyribonucleotides from the corresponding ribonucleotides (By similarity).</text>
</comment>
<comment type="catalytic activity">
    <reaction>
        <text>a 2'-deoxyribonucleoside 5'-diphosphate + [thioredoxin]-disulfide + H2O = a ribonucleoside 5'-diphosphate + [thioredoxin]-dithiol</text>
        <dbReference type="Rhea" id="RHEA:23252"/>
        <dbReference type="Rhea" id="RHEA-COMP:10698"/>
        <dbReference type="Rhea" id="RHEA-COMP:10700"/>
        <dbReference type="ChEBI" id="CHEBI:15377"/>
        <dbReference type="ChEBI" id="CHEBI:29950"/>
        <dbReference type="ChEBI" id="CHEBI:50058"/>
        <dbReference type="ChEBI" id="CHEBI:57930"/>
        <dbReference type="ChEBI" id="CHEBI:73316"/>
        <dbReference type="EC" id="1.17.4.1"/>
    </reaction>
</comment>
<comment type="activity regulation">
    <text evidence="1">Under complex allosteric control mediated by deoxynucleoside triphosphates and ATP binding. The type of nucleotide bound at the specificity site determines substrate preference. It seems probable that ATP makes the enzyme reduce CDP and UDP, dGTP favors ADP reduction and dTTP favors GDP reduction (By similarity).</text>
</comment>
<comment type="subunit">
    <text evidence="1">Tetramer of two alpha and two beta subunits.</text>
</comment>
<comment type="similarity">
    <text evidence="4">Belongs to the ribonucleoside diphosphate reductase large chain family.</text>
</comment>
<sequence length="767" mass="85637">MHPTLISAPISSSANDAHAGTSQGSHQGHRIQVIRRDGSSTPLNIGKIRAVVDWACLGLEVNSIALEAGLTTRLREGISTREIQDNLISCALEMCSPNEPDWRYVAGRLHVWSLWKDTLVRRGYQYGQYLRTVQTKVTNGEYDSRILTYSEGELQEAGCWINSDWDTDYDYAGAVLLTSRYLLPNELPQEALLTCALLLASVEAPDRRLQWARRFYESIAARRISLATPILANLRVPGGSLTSCFIVAMEDNLESIFGEITNAARISKNGGGVGVNVSRIRATGSWVMGKPNASGGVIPWTKLLNDTAIAVNQGGRRAGAVTVGLDVWHLDVPEFLEMQAENGDQRRKAYDIFPQLILPDEFMRRVINKEDWTLVDPYEVREKMGIELAELWGEQFEGAYREIESNLDTTITLYKRINARELFKQIMRTQVETGMPYLSFKDTINKANPNKHLGYIPGTNLCCESFSNVTPGQDAHCCNLVSLNLANLDLQDIAGVSQIAVRMLDNTIELTAPPFADAKSHNNKYRTIGVGAMGLADWLAKRRLNYDELADINRLFEEIGYWCTQSSMELAKERGAYPAFPGSDWQKGLLIGSKPVSWFQANAAKPERWEKLSNDIQTHGIRNSHITAIAPNTSSSLVQGCTASILPVYSRFFYDKWAKGTVPIAPPFIGNCFWFYPENKTMDQRKVVKAVAAIQQWTDTGISMELLFNLNAGIYFPEEPERSLNAKDIFDTLVMAWEAGCKAIYYIRTVQKDDFKDSSDGCVACAN</sequence>
<evidence type="ECO:0000250" key="1"/>
<evidence type="ECO:0000255" key="2">
    <source>
        <dbReference type="PROSITE-ProRule" id="PRU00492"/>
    </source>
</evidence>
<evidence type="ECO:0000256" key="3">
    <source>
        <dbReference type="SAM" id="MobiDB-lite"/>
    </source>
</evidence>
<evidence type="ECO:0000305" key="4"/>
<organism>
    <name type="scientific">Synechocystis sp. (strain ATCC 27184 / PCC 6803 / Kazusa)</name>
    <dbReference type="NCBI Taxonomy" id="1111708"/>
    <lineage>
        <taxon>Bacteria</taxon>
        <taxon>Bacillati</taxon>
        <taxon>Cyanobacteriota</taxon>
        <taxon>Cyanophyceae</taxon>
        <taxon>Synechococcales</taxon>
        <taxon>Merismopediaceae</taxon>
        <taxon>Synechocystis</taxon>
    </lineage>
</organism>